<keyword id="KW-1015">Disulfide bond</keyword>
<keyword id="KW-0378">Hydrolase</keyword>
<keyword id="KW-0479">Metal-binding</keyword>
<keyword id="KW-0482">Metalloprotease</keyword>
<keyword id="KW-0574">Periplasm</keyword>
<keyword id="KW-0645">Protease</keyword>
<keyword id="KW-0732">Signal</keyword>
<keyword id="KW-0862">Zinc</keyword>
<evidence type="ECO:0000255" key="1">
    <source>
        <dbReference type="HAMAP-Rule" id="MF_01623"/>
    </source>
</evidence>
<evidence type="ECO:0000256" key="2">
    <source>
        <dbReference type="SAM" id="MobiDB-lite"/>
    </source>
</evidence>
<gene>
    <name evidence="1" type="primary">mepA</name>
    <name type="ordered locus">SeD_A2736</name>
</gene>
<feature type="signal peptide" evidence="1">
    <location>
        <begin position="1"/>
        <end position="19"/>
    </location>
</feature>
<feature type="chain" id="PRO_1000186106" description="Penicillin-insensitive murein endopeptidase">
    <location>
        <begin position="20"/>
        <end position="274"/>
    </location>
</feature>
<feature type="region of interest" description="Disordered" evidence="2">
    <location>
        <begin position="225"/>
        <end position="274"/>
    </location>
</feature>
<feature type="binding site" evidence="1">
    <location>
        <position position="110"/>
    </location>
    <ligand>
        <name>Zn(2+)</name>
        <dbReference type="ChEBI" id="CHEBI:29105"/>
        <label>1</label>
    </ligand>
</feature>
<feature type="binding site" evidence="1">
    <location>
        <position position="113"/>
    </location>
    <ligand>
        <name>Zn(2+)</name>
        <dbReference type="ChEBI" id="CHEBI:29105"/>
        <label>1</label>
    </ligand>
</feature>
<feature type="binding site" evidence="1">
    <location>
        <position position="120"/>
    </location>
    <ligand>
        <name>Zn(2+)</name>
        <dbReference type="ChEBI" id="CHEBI:29105"/>
        <label>1</label>
    </ligand>
</feature>
<feature type="binding site" evidence="1">
    <location>
        <position position="147"/>
    </location>
    <ligand>
        <name>Zn(2+)</name>
        <dbReference type="ChEBI" id="CHEBI:29105"/>
        <label>2</label>
    </ligand>
</feature>
<feature type="binding site" evidence="1">
    <location>
        <position position="150"/>
    </location>
    <ligand>
        <name>Zn(2+)</name>
        <dbReference type="ChEBI" id="CHEBI:29105"/>
        <label>2</label>
    </ligand>
</feature>
<feature type="binding site" evidence="1">
    <location>
        <position position="211"/>
    </location>
    <ligand>
        <name>Zn(2+)</name>
        <dbReference type="ChEBI" id="CHEBI:29105"/>
        <label>1</label>
    </ligand>
</feature>
<feature type="disulfide bond" evidence="1">
    <location>
        <begin position="44"/>
        <end position="265"/>
    </location>
</feature>
<feature type="disulfide bond" evidence="1">
    <location>
        <begin position="187"/>
        <end position="235"/>
    </location>
</feature>
<feature type="disulfide bond" evidence="1">
    <location>
        <begin position="216"/>
        <end position="223"/>
    </location>
</feature>
<sequence length="274" mass="30262">MKKTAIALLAWFVSSASLAATPWQKITHPVPGAAQSIGSFANGCIIGADTLPVQSDNYQVMRTDQRRYFGHPDLVMFIQRLSHQAQQRGLGTVLIGDMGMPAGGRFNGGHASHQTGLDVDIFLQLPKTRWSQAQLLRPQALDLVSRDGKHVVPSRWSSDIASLIKLAAQDNDVTRIFVNPAIKQQLCLDAGNDRDWLRKVRPWFQHRAHMHVRLRCPADSLECEDQPLPPPGDGCGAELQSWFEPPKPGTTKPEKKTPPPLPPSCQALLDEHVL</sequence>
<reference key="1">
    <citation type="journal article" date="2011" name="J. Bacteriol.">
        <title>Comparative genomics of 28 Salmonella enterica isolates: evidence for CRISPR-mediated adaptive sublineage evolution.</title>
        <authorList>
            <person name="Fricke W.F."/>
            <person name="Mammel M.K."/>
            <person name="McDermott P.F."/>
            <person name="Tartera C."/>
            <person name="White D.G."/>
            <person name="Leclerc J.E."/>
            <person name="Ravel J."/>
            <person name="Cebula T.A."/>
        </authorList>
    </citation>
    <scope>NUCLEOTIDE SEQUENCE [LARGE SCALE GENOMIC DNA]</scope>
    <source>
        <strain>CT_02021853</strain>
    </source>
</reference>
<accession>B5FPM6</accession>
<organism>
    <name type="scientific">Salmonella dublin (strain CT_02021853)</name>
    <dbReference type="NCBI Taxonomy" id="439851"/>
    <lineage>
        <taxon>Bacteria</taxon>
        <taxon>Pseudomonadati</taxon>
        <taxon>Pseudomonadota</taxon>
        <taxon>Gammaproteobacteria</taxon>
        <taxon>Enterobacterales</taxon>
        <taxon>Enterobacteriaceae</taxon>
        <taxon>Salmonella</taxon>
    </lineage>
</organism>
<name>MEPA_SALDC</name>
<dbReference type="EC" id="3.4.24.-" evidence="1"/>
<dbReference type="EMBL" id="CP001144">
    <property type="protein sequence ID" value="ACH75871.1"/>
    <property type="molecule type" value="Genomic_DNA"/>
</dbReference>
<dbReference type="RefSeq" id="WP_000750428.1">
    <property type="nucleotide sequence ID" value="NC_011205.1"/>
</dbReference>
<dbReference type="SMR" id="B5FPM6"/>
<dbReference type="MEROPS" id="M74.001"/>
<dbReference type="KEGG" id="sed:SeD_A2736"/>
<dbReference type="HOGENOM" id="CLU_052496_0_0_6"/>
<dbReference type="Proteomes" id="UP000008322">
    <property type="component" value="Chromosome"/>
</dbReference>
<dbReference type="GO" id="GO:0030288">
    <property type="term" value="C:outer membrane-bounded periplasmic space"/>
    <property type="evidence" value="ECO:0007669"/>
    <property type="project" value="InterPro"/>
</dbReference>
<dbReference type="GO" id="GO:0046872">
    <property type="term" value="F:metal ion binding"/>
    <property type="evidence" value="ECO:0007669"/>
    <property type="project" value="UniProtKB-KW"/>
</dbReference>
<dbReference type="GO" id="GO:0004222">
    <property type="term" value="F:metalloendopeptidase activity"/>
    <property type="evidence" value="ECO:0007669"/>
    <property type="project" value="UniProtKB-UniRule"/>
</dbReference>
<dbReference type="GO" id="GO:0004252">
    <property type="term" value="F:serine-type endopeptidase activity"/>
    <property type="evidence" value="ECO:0007669"/>
    <property type="project" value="InterPro"/>
</dbReference>
<dbReference type="GO" id="GO:0000270">
    <property type="term" value="P:peptidoglycan metabolic process"/>
    <property type="evidence" value="ECO:0007669"/>
    <property type="project" value="UniProtKB-UniRule"/>
</dbReference>
<dbReference type="GO" id="GO:0006508">
    <property type="term" value="P:proteolysis"/>
    <property type="evidence" value="ECO:0007669"/>
    <property type="project" value="UniProtKB-KW"/>
</dbReference>
<dbReference type="FunFam" id="3.30.1380.10:FF:000002">
    <property type="entry name" value="Penicillin-insensitive murein endopeptidase"/>
    <property type="match status" value="1"/>
</dbReference>
<dbReference type="Gene3D" id="3.30.1380.10">
    <property type="match status" value="1"/>
</dbReference>
<dbReference type="HAMAP" id="MF_01623">
    <property type="entry name" value="MepA"/>
    <property type="match status" value="1"/>
</dbReference>
<dbReference type="InterPro" id="IPR009045">
    <property type="entry name" value="Hedgehog_sig/DD-Pept_Zn-bd_sf"/>
</dbReference>
<dbReference type="InterPro" id="IPR005073">
    <property type="entry name" value="Peptidase_M74"/>
</dbReference>
<dbReference type="NCBIfam" id="NF006947">
    <property type="entry name" value="PRK09429.1"/>
    <property type="match status" value="1"/>
</dbReference>
<dbReference type="Pfam" id="PF03411">
    <property type="entry name" value="Peptidase_M74"/>
    <property type="match status" value="1"/>
</dbReference>
<dbReference type="PIRSF" id="PIRSF018455">
    <property type="entry name" value="MepA"/>
    <property type="match status" value="1"/>
</dbReference>
<dbReference type="SUPFAM" id="SSF55166">
    <property type="entry name" value="Hedgehog/DD-peptidase"/>
    <property type="match status" value="1"/>
</dbReference>
<proteinExistence type="inferred from homology"/>
<comment type="function">
    <text evidence="1">Murein endopeptidase that cleaves the D-alanyl-meso-2,6-diamino-pimelyl amide bond that connects peptidoglycan strands. Likely plays a role in the removal of murein from the sacculus.</text>
</comment>
<comment type="cofactor">
    <cofactor evidence="1">
        <name>Zn(2+)</name>
        <dbReference type="ChEBI" id="CHEBI:29105"/>
    </cofactor>
    <text evidence="1">Binds 2 Zn(2+) ions per subunit. Zn(2+) ion 1 is bound in the active site. Zn(2+) ion 2 is bound at the dimer interface by residues from both subunits.</text>
</comment>
<comment type="subunit">
    <text evidence="1">Dimer.</text>
</comment>
<comment type="subcellular location">
    <subcellularLocation>
        <location evidence="1">Periplasm</location>
    </subcellularLocation>
</comment>
<comment type="similarity">
    <text evidence="1">Belongs to the peptidase M74 family.</text>
</comment>
<protein>
    <recommendedName>
        <fullName evidence="1">Penicillin-insensitive murein endopeptidase</fullName>
        <ecNumber evidence="1">3.4.24.-</ecNumber>
    </recommendedName>
    <alternativeName>
        <fullName evidence="1">D-alanyl-D-alanine-endopeptidase</fullName>
        <shortName evidence="1">DD-endopeptidase</shortName>
    </alternativeName>
</protein>